<comment type="function">
    <molecule>Leader protein</molecule>
    <text evidence="6 9 11">Forms a complex with host RAN and probably binds to exportins carrying activated MAPK in order to mediate the hyperphosphorylation of host Phe/Gly containing nuclear pore proteins (Nups) resulting in cessation of active nucleocytoplasmic transport (By similarity). Proteins with NLS signals fail to import, cellular mRNAs fail to export, and some proteins small enough for diffusion are not retained anymore (efflux) (By similarity). The resulting inhibition of cellular protein synthesis serves to ensure maximal viral gene expression and to evade host immune response (By similarity). The leader protein also inhibits host interferon regulatory factor 3 (IRF3) dimerization, thereby blocking the transcriptional activation of IFN genes (By similarity). Binds to host RNase L thereby preventing its activation by 2'-5' oligoadenylates in order to counteract the antiviral interferon-inducible OAS/RNase L pathway (By similarity). Inhibits the integrated stress response (ISR) in the infected cell. Inhibits the host EIF2AK2/PKR by rendering this kinase unable to detect double-stranded RNA. Also impairs host stress granule formation probably by acting on a step downstream of EIF2AK2/PKR activation (By similarity).</text>
</comment>
<comment type="function">
    <molecule>Capsid protein VP1</molecule>
    <text evidence="2">Forms an icosahedral capsid of pseudo T=3 symmetry with capsid proteins VP2 and VP3. Together they form an icosahedral capsid composed of 60 copies of each VP1, VP2, and VP3, with a diameter of approximately 300 Angstroms. VP4 lies on the inner surface of the protein shell formed by VP1, VP2 and VP3. All the three latter proteins contain a beta-sheet structure called beta-barrel jelly roll. VP1 is situated at the 12 fivefold axes, whereas VP2 and VP3 are located at the quasi-sixfold axes.</text>
</comment>
<comment type="function">
    <molecule>Capsid protein VP2</molecule>
    <text evidence="2">Forms an icosahedral capsid of pseudo T=3 symmetry with capsid proteins VP2 and VP3. Together they form an icosahedral capsid composed of 60 copies of each VP1, VP2, and VP3, with a diameter of approximately 300 Angstroms. VP4 lies on the inner surface of the protein shell formed by VP1, VP2 and VP3. All the three latter proteins contain a beta-sheet structure called beta-barrel jelly roll. VP1 is situated at the 12 fivefold axes, whereas VP2 and VP3 are located at the quasi-sixfold axes.</text>
</comment>
<comment type="function">
    <molecule>Capsid protein VP3</molecule>
    <text evidence="2">Forms an icosahedral capsid of pseudo T=3 symmetry with capsid proteins VP2 and VP3. Together they form an icosahedral capsid composed of 60 copies of each VP1, VP2, and VP3, with a diameter of approximately 300 Angstroms. VP4 lies on the inner surface of the protein shell formed by VP1, VP2 and VP3. All the three latter proteins contain a beta-sheet structure called beta-barrel jelly roll. VP1 is situated at the 12 fivefold axes, whereas VP2 and VP3 are located at the quasi-sixfold axes.</text>
</comment>
<comment type="function">
    <molecule>Capsid protein VP4</molecule>
    <text evidence="2 3">Lies on the inner surface of the capsid shell (By similarity). After binding to the host receptor, the capsid undergoes conformational changes (By similarity). Capsid protein VP4 is released, capsid protein VP1 N-terminus is externalized, and together, they shape a pore in the host membrane through which the viral genome is translocated into the host cell cytoplasm (By similarity). After genome has been released, the channel shrinks (By similarity).</text>
</comment>
<comment type="function">
    <molecule>Capsid protein VP0</molecule>
    <text evidence="7">VP0 precursor is a component of immature procapsids.</text>
</comment>
<comment type="function">
    <molecule>Protein 2A</molecule>
    <text evidence="8 11">Involved in host translation shutoff by inhibiting cap-dependent mRNA translation (By similarity). Nuclear localization is required for this function (By similarity). The resulting inhibition of cellular protein synthesis serves to ensure maximal viral gene expression and to evade host immune response (By similarity). Inhibits the phosphorylation of the leader protein (By similarity). Binds to the RNA stem-loop essential for the ribosomal frameshift event and trans-activates the production of protein 2B* (By similarity).</text>
</comment>
<comment type="function">
    <molecule>Protein 2B</molecule>
    <text evidence="1">Affects membrane integrity and causes an increase in membrane permeability.</text>
</comment>
<comment type="function">
    <molecule>Protein 2C</molecule>
    <text evidence="5 20">Associates with and induces structural rearrangements of intracellular membranes (Probable). It displays RNA-binding, nucleotide binding and NTPase activities (By similarity).</text>
</comment>
<comment type="function">
    <molecule>Protein 3A</molecule>
    <text evidence="1">Serves as membrane anchor via its hydrophobic domain.</text>
</comment>
<comment type="function">
    <molecule>VPg</molecule>
    <text evidence="4">Forms a primer, VPg-pU, which is utilized by the polymerase for the initiation of RNA chains.</text>
</comment>
<comment type="function">
    <molecule>Protease 3C</molecule>
    <text evidence="4 8">Cysteine protease that generates mature viral proteins from the precursor polyprotein (By similarity). In addition to its proteolytic activity, it binds to viral RNA, and thus influences viral genome replication. RNA and substrate cooperatively bind to the protease. Cleaves host PABP1, this cleavage is important for viral replication (By similarity).</text>
</comment>
<comment type="function">
    <molecule>RNA-directed RNA polymerase</molecule>
    <text evidence="8">Replicates the genomic and antigenomic RNAs by recognizing replications specific signals (By similarity). Performs VPg uridylylation (By similarity).</text>
</comment>
<comment type="catalytic activity">
    <reaction evidence="13">
        <text>RNA(n) + a ribonucleoside 5'-triphosphate = RNA(n+1) + diphosphate</text>
        <dbReference type="Rhea" id="RHEA:21248"/>
        <dbReference type="Rhea" id="RHEA-COMP:14527"/>
        <dbReference type="Rhea" id="RHEA-COMP:17342"/>
        <dbReference type="ChEBI" id="CHEBI:33019"/>
        <dbReference type="ChEBI" id="CHEBI:61557"/>
        <dbReference type="ChEBI" id="CHEBI:140395"/>
        <dbReference type="EC" id="2.7.7.48"/>
    </reaction>
</comment>
<comment type="catalytic activity">
    <reaction evidence="19">
        <text>ATP + H2O = ADP + phosphate + H(+)</text>
        <dbReference type="Rhea" id="RHEA:13065"/>
        <dbReference type="ChEBI" id="CHEBI:15377"/>
        <dbReference type="ChEBI" id="CHEBI:15378"/>
        <dbReference type="ChEBI" id="CHEBI:30616"/>
        <dbReference type="ChEBI" id="CHEBI:43474"/>
        <dbReference type="ChEBI" id="CHEBI:456216"/>
        <dbReference type="EC" id="3.6.4.13"/>
    </reaction>
</comment>
<comment type="catalytic activity">
    <reaction evidence="15">
        <text>Selective cleavage of Gln-|-Gly bond in the poliovirus polyprotein. In other picornavirus reactions Glu may be substituted for Gln, and Ser or Thr for Gly.</text>
        <dbReference type="EC" id="3.4.22.28"/>
    </reaction>
</comment>
<comment type="subunit">
    <molecule>Protein 2A</molecule>
    <text evidence="6 9 11">Interacts with host EIF4E (By similarity). Interacts with the leader protein (By similarity).</text>
</comment>
<comment type="subunit">
    <molecule>Leader protein</molecule>
    <text evidence="6 9 11">Interacts with host RAN; the complex L-RAN recruits cellular kinases responsible for the L-induced nucleocytoplasmic trafficking inhibition (By similarity). The complex L-RAN can further bind to the host exportins XPO1/CRM1 and CSE1L/CAS (By similarity). Interacts with the protein 2A (By similarity). Interacts with host RNASEL; this interaction prevents RNASEL activation by its substrate 2'-5' oligoadenylates (By similarity).</text>
</comment>
<comment type="subcellular location">
    <molecule>Capsid protein VP2</molecule>
    <subcellularLocation>
        <location evidence="2">Virion</location>
    </subcellularLocation>
    <subcellularLocation>
        <location evidence="19">Host cytoplasm</location>
    </subcellularLocation>
</comment>
<comment type="subcellular location">
    <molecule>Capsid protein VP3</molecule>
    <subcellularLocation>
        <location evidence="2">Virion</location>
    </subcellularLocation>
    <subcellularLocation>
        <location evidence="19">Host cytoplasm</location>
    </subcellularLocation>
</comment>
<comment type="subcellular location">
    <molecule>Capsid protein VP1</molecule>
    <subcellularLocation>
        <location evidence="2">Virion</location>
    </subcellularLocation>
    <subcellularLocation>
        <location evidence="19">Host cytoplasm</location>
    </subcellularLocation>
</comment>
<comment type="subcellular location">
    <molecule>Protein 2A</molecule>
    <subcellularLocation>
        <location evidence="11">Host nucleus</location>
        <location evidence="11">Host nucleolus</location>
    </subcellularLocation>
</comment>
<comment type="subcellular location">
    <molecule>Protein 2B</molecule>
    <subcellularLocation>
        <location evidence="19">Host cytoplasmic vesicle membrane</location>
        <topology evidence="19">Peripheral membrane protein</topology>
        <orientation evidence="19">Cytoplasmic side</orientation>
    </subcellularLocation>
    <text evidence="19">Probably localizes to the surface of intracellular membrane vesicles that are induced after virus infection as the site for viral RNA replication. These vesicles are probably autophagosome-like vesicles.</text>
</comment>
<comment type="subcellular location">
    <molecule>Protein 2C</molecule>
    <subcellularLocation>
        <location evidence="20">Host cytoplasmic vesicle membrane</location>
        <topology evidence="19">Peripheral membrane protein</topology>
        <orientation evidence="19">Cytoplasmic side</orientation>
    </subcellularLocation>
    <text evidence="17 19">Probably localizes to the surface of intracellular membrane vesicles that are induced after virus infection as the site for viral RNA replication (PubMed:20471424). These vesicles are probably autophagosome-like vesicles (Probable).</text>
</comment>
<comment type="subcellular location">
    <molecule>Protein 3A</molecule>
    <subcellularLocation>
        <location evidence="4">Host cytoplasmic vesicle membrane</location>
        <topology evidence="19">Peripheral membrane protein</topology>
        <orientation evidence="19">Cytoplasmic side</orientation>
    </subcellularLocation>
    <text evidence="4">Probably localizes to the surface of intracellular membrane vesicles that are induced after virus infection as the site for viral RNA replication. These vesicles are probably autophagosome-like vesicles.</text>
</comment>
<comment type="subcellular location">
    <molecule>VPg</molecule>
    <subcellularLocation>
        <location evidence="19">Virion</location>
    </subcellularLocation>
</comment>
<comment type="subcellular location">
    <molecule>Protease 3C</molecule>
    <subcellularLocation>
        <location evidence="19">Host cytoplasm</location>
    </subcellularLocation>
</comment>
<comment type="subcellular location">
    <molecule>RNA-directed RNA polymerase</molecule>
    <subcellularLocation>
        <location evidence="19">Host cytoplasmic vesicle membrane</location>
        <topology evidence="19">Peripheral membrane protein</topology>
        <orientation evidence="19">Cytoplasmic side</orientation>
    </subcellularLocation>
    <text evidence="19">Probably localizes to the surface of intracellular membrane vesicles that are induced after virus infection as the site for viral RNA replication. These vesicles are probably autophagosome-like vesicles.</text>
</comment>
<comment type="alternative products">
    <event type="ribosomal frameshifting"/>
    <isoform>
        <id>P08545-1</id>
        <name>Genome polyprotein</name>
        <sequence type="displayed"/>
    </isoform>
    <isoform>
        <id>P0DOK5-1</id>
        <name>2B*</name>
        <sequence type="external"/>
    </isoform>
</comment>
<comment type="domain">
    <molecule>Leader protein</molecule>
    <text evidence="9">The Theilo and zinc-finger regions may both play a role in the inhibition of host nucleocytoplasmic trafficking and IRF-3 dimerization antagonism by the L protein.</text>
</comment>
<comment type="PTM">
    <molecule>Leader protein</molecule>
    <text evidence="11">Phosphorylated.</text>
</comment>
<comment type="PTM">
    <molecule>Genome polyprotein</molecule>
    <text evidence="4">Specific enzymatic cleavages by the viral protease in vivo yield a variety of precursors and mature proteins (By similarity). The polyprotein seems to be cotranslationally cleaved at the 2A/2B junction by a ribosomal skip from one codon to the next without formation of a peptide bond (By similarity). This process would release the P1-2A peptide from the translational complex (By similarity).</text>
</comment>
<comment type="PTM">
    <molecule>Capsid protein VP0</molecule>
    <text evidence="3">During virion maturation, immature virions are rendered infectious following cleavage of VP0 into VP4 and VP2. This maturation seems to be an autocatalytic event triggered by the presence of RNA in the capsid and is followed by a conformational change of the particle.</text>
</comment>
<comment type="PTM">
    <molecule>VPg</molecule>
    <text evidence="8">Uridylylated by the polymerase and is covalently linked to the 5'-end of genomic RNA. This uridylylated form acts as a nucleotide-peptide primer for the polymerase.</text>
</comment>
<comment type="PTM">
    <molecule>Capsid protein VP4</molecule>
    <text evidence="10">Myristoylation is required during RNA encapsidation and formation of the mature virus particle.</text>
</comment>
<comment type="miscellaneous">
    <text>Persistent strains of Theiler's virus (e.g. DA, TO, BeAn) cause persistent demyelinating disease whereas neurovirulent strains (such as GDVII) cause acute encephalitis.</text>
</comment>
<comment type="miscellaneous">
    <molecule>Isoform Genome polyprotein</molecule>
    <text evidence="18">Produced by conventional translation.</text>
</comment>
<comment type="similarity">
    <text evidence="19">Belongs to the picornaviruses polyprotein family.</text>
</comment>
<evidence type="ECO:0000250" key="1"/>
<evidence type="ECO:0000250" key="2">
    <source>
        <dbReference type="UniProtKB" id="C0MHL9"/>
    </source>
</evidence>
<evidence type="ECO:0000250" key="3">
    <source>
        <dbReference type="UniProtKB" id="P03300"/>
    </source>
</evidence>
<evidence type="ECO:0000250" key="4">
    <source>
        <dbReference type="UniProtKB" id="P03304"/>
    </source>
</evidence>
<evidence type="ECO:0000250" key="5">
    <source>
        <dbReference type="UniProtKB" id="P03305"/>
    </source>
</evidence>
<evidence type="ECO:0000250" key="6">
    <source>
        <dbReference type="UniProtKB" id="P08544"/>
    </source>
</evidence>
<evidence type="ECO:0000250" key="7">
    <source>
        <dbReference type="UniProtKB" id="P08617"/>
    </source>
</evidence>
<evidence type="ECO:0000250" key="8">
    <source>
        <dbReference type="UniProtKB" id="P12296"/>
    </source>
</evidence>
<evidence type="ECO:0000250" key="9">
    <source>
        <dbReference type="UniProtKB" id="P13899"/>
    </source>
</evidence>
<evidence type="ECO:0000250" key="10">
    <source>
        <dbReference type="UniProtKB" id="Q66282"/>
    </source>
</evidence>
<evidence type="ECO:0000250" key="11">
    <source>
        <dbReference type="UniProtKB" id="Q66765"/>
    </source>
</evidence>
<evidence type="ECO:0000255" key="12"/>
<evidence type="ECO:0000255" key="13">
    <source>
        <dbReference type="PROSITE-ProRule" id="PRU00539"/>
    </source>
</evidence>
<evidence type="ECO:0000255" key="14">
    <source>
        <dbReference type="PROSITE-ProRule" id="PRU00551"/>
    </source>
</evidence>
<evidence type="ECO:0000255" key="15">
    <source>
        <dbReference type="PROSITE-ProRule" id="PRU01222"/>
    </source>
</evidence>
<evidence type="ECO:0000256" key="16">
    <source>
        <dbReference type="SAM" id="MobiDB-lite"/>
    </source>
</evidence>
<evidence type="ECO:0000269" key="17">
    <source>
    </source>
</evidence>
<evidence type="ECO:0000269" key="18">
    <source>
    </source>
</evidence>
<evidence type="ECO:0000305" key="19"/>
<evidence type="ECO:0000305" key="20">
    <source>
    </source>
</evidence>
<evidence type="ECO:0007829" key="21">
    <source>
        <dbReference type="PDB" id="7NBV"/>
    </source>
</evidence>
<keyword id="KW-0002">3D-structure</keyword>
<keyword id="KW-0067">ATP-binding</keyword>
<keyword id="KW-0167">Capsid protein</keyword>
<keyword id="KW-0191">Covalent protein-RNA linkage</keyword>
<keyword id="KW-1015">Disulfide bond</keyword>
<keyword id="KW-1262">Eukaryotic host gene expression shutoff by virus</keyword>
<keyword id="KW-1193">Eukaryotic host translation shutoff by virus</keyword>
<keyword id="KW-0347">Helicase</keyword>
<keyword id="KW-1035">Host cytoplasm</keyword>
<keyword id="KW-1036">Host cytoplasmic vesicle</keyword>
<keyword id="KW-1190">Host gene expression shutoff by virus</keyword>
<keyword id="KW-1043">Host membrane</keyword>
<keyword id="KW-1192">Host mRNA suppression by virus</keyword>
<keyword id="KW-1048">Host nucleus</keyword>
<keyword id="KW-0945">Host-virus interaction</keyword>
<keyword id="KW-0378">Hydrolase</keyword>
<keyword id="KW-1090">Inhibition of host innate immune response by virus</keyword>
<keyword id="KW-1114">Inhibition of host interferon signaling pathway by virus</keyword>
<keyword id="KW-1099">Inhibition of host mRNA nuclear export by virus</keyword>
<keyword id="KW-1102">Inhibition of host PKR by virus</keyword>
<keyword id="KW-1088">Inhibition of host RIG-I by virus</keyword>
<keyword id="KW-1113">Inhibition of host RLR pathway by virus</keyword>
<keyword id="KW-0922">Interferon antiviral system evasion</keyword>
<keyword id="KW-0407">Ion channel</keyword>
<keyword id="KW-0406">Ion transport</keyword>
<keyword id="KW-0449">Lipoprotein</keyword>
<keyword id="KW-0472">Membrane</keyword>
<keyword id="KW-0479">Metal-binding</keyword>
<keyword id="KW-0519">Myristate</keyword>
<keyword id="KW-0547">Nucleotide-binding</keyword>
<keyword id="KW-0548">Nucleotidyltransferase</keyword>
<keyword id="KW-0597">Phosphoprotein</keyword>
<keyword id="KW-0645">Protease</keyword>
<keyword id="KW-0688">Ribosomal frameshifting</keyword>
<keyword id="KW-0694">RNA-binding</keyword>
<keyword id="KW-0696">RNA-directed RNA polymerase</keyword>
<keyword id="KW-1143">T=pseudo3 icosahedral capsid protein</keyword>
<keyword id="KW-0788">Thiol protease</keyword>
<keyword id="KW-0808">Transferase</keyword>
<keyword id="KW-0813">Transport</keyword>
<keyword id="KW-1161">Viral attachment to host cell</keyword>
<keyword id="KW-0899">Viral immunoevasion</keyword>
<keyword id="KW-1182">Viral ion channel</keyword>
<keyword id="KW-0693">Viral RNA replication</keyword>
<keyword id="KW-0946">Virion</keyword>
<keyword id="KW-1160">Virus entry into host cell</keyword>
<keyword id="KW-0862">Zinc</keyword>
<keyword id="KW-0863">Zinc-finger</keyword>
<name>POLG_TMEVG</name>
<sequence>MACKHGYPDVCPICTAVDATPDFEYLLMADGEWFPTDLLCVDLDDDVFWPSDTSTQPQTMEWTDVPLVCDTVMEPQGNASSSDKSNSQSSGNEGVIINNFYSNQYQNSIDLSASGGNAGDAPQNNGQLSSILGGAANAFATMAPLLMDQNTEEMENLSDRVASDKAGNSATNTQSTVGRLCGYGKSHHGEHPTSCADAATDKVLAAERYYTIDLASWTTSQEAFSHIRIPLPHVLAGEDGGVFGATLRRHYLCKTGWRVQVQCNASQFHAGSLLVFMAPEFYTGKGTKSGTMEPSDPFTMDTTWRSPQSAPTGYRYDRQAGFFAMNHQNQWQWTVYPHQILNLRTNTTVDLEVPYVNVAPSSSWTQHANWTLVVAVLSPLQYATGSSPDVQITASLQPVNPVFNGLRHETVLAQSPIPVTVREHQGCFYSTNPDTTVPIYGKTISTPSDYMCGEFSDLLELCKLPTFLGNPSTDNKRYPYFSATNSVPATSLVDYQVALSCSCTANSMLAAVARNFNQYRGSLNFLFVFTGAAMVKGKFRIAYTPPGAGKPTTRDQAMQATYAIWDLGLNSSFNFTAPFISPTHYRQTSYTSPTITSVDGWVTVWQLTPLTYPSGTPTHSDILTLVSAGDDFTLRMPISPTKWVPQGIDNAEKGKVSNDDASVDFVAEPVKLPENQTRVAFFYDRAVPIGMLRPGQNMETTFSYQENDFRLNCLLLTPLPSYCPDSSSGPVRTKAPVQWRWVRSGGANGANFPLMTKQDYAFLCFSPFTYYKCDLEVTVSAMGAGTVSSVLRWAPTGAPADVTDQLIGYTPSLGETRNPHMWIVGSGNSQISFVVPYNSPLSVLPAAWFNGWSDFGNTKDFGVAPTSDFGRIWIQGNSSASVRIRYKKMKVFCPRPTLFFPWPTPTTTKINADNPVPILELENPASLYRIDLFITFTDELITFDYKVHGRPVLTFRIPGFGLTPAGRMLVCMGAKPAHSPFTSSKSLYHVIFTSTCNSFSFTIYKGRYRSWKKPIHDELVDRGYTTFREFFKAVRGYHADYYKQRLIHDVEMNPGPVQSVFQPQGAVLTKSLAPQAGIQNILLRLLGIEGDCSEVSKAITVVTDLVAAWEKAKTTLVSPEFWSELILKTTKFIAASVLYLHNPDFTTTVCLSLMTGVDLLTNDSVFDWLKSKLSSFFRTPPPACPNVMQPQGPLREANEGFTFAKNIEWATKTIQSIVNWLTSWFKQEEDHPQSKLDKLLMEFPDHCRNIMDMRNGRKAYCECTASFKYFDDLYNLAVTCKRIPLASLCEKFKNRHDHSVTRPEPVVAVLRGAAGQGKSVTSQIIAQSVSKMAFGRQSVYSMPPDSEYFDGYENQFSVIMDDLGQNPDGEDFTVFCQMVSSTNFLPNMAHLERKGTPFTSSFIVATTNLPKFRPVTVAHYPAVDRRITFDFTVTAGPHCKTPAGMLDIEKAFDEIPGSKPQLACFSADCPLLHKRGVMFTCNRTKTVYNLQQVVKMVNDTITRKTENVKKMNSLVAQSPPDWQHFENILTCLRQNNAALQDQVDELQEAFTQARERSDFLSDWLKVSAIIFAGIVSLSAVIKLASKFKESIWPTPVRVELSEGEQAAYAGRARAQKQALQVLDIQGGGKVLAQAGNPVMDFELFCAKNMVSPITFYYPDKAEVTQSCLLLRAHLFVVNRHVAETEWTAFKLRDVRHERDTVVMRSVNRSGAETDLTFVKVTKGPLFKDNVNKFCSNKDDFPARNDTVTGIMNTGLAFVYSGNFLIGNQPVNTTTGACFNHCLHYRAQTRRGWCGSAIICNVNGKKAVYGMHSAGGGGLAAATIITRELIEAAEKSMLALEPQGAIVDISTGSVVHVPRKTKLRRTVAHDVFQPKFEPAVLSRYDPRTDKDVDVVAFSKHTTNMESLPPIFDIVCGEYANRVFTILGKDNGLLTVEQAVLGLSGMDPMEKDTSPGLPYTQQGLRRTDLLDFNTAKMTPQLDYAHSKLVLGVYDDVVYQSFLKDEIRPLEKIHEAKTRIVDVPPFAHCIWGRQLLGRFASKFQTKPGFELGSAIGTDPDVDWTRYAAELSGFNYVYDVDYSNFDASHSTAMFECLINNFFTEQNGFDRRIAEYLRSLAVSRHAYEDRRVLIRGGLPSGCAATSMLNTIMNNVIIRAALYLTYSNFEFDDIKVLSYGDDLLIGTNYQIDFNLVKERLAPFGYKITPANKTTTFPLTSHLQDVTFLKRRFVRFNSYLFRPQMDAVNLKAMVSYCKPGTLKEKLMSIALLAVHSGPDIYDEIFLPFRNVGIVVPTYDSMLYRWLSLFR</sequence>
<organismHost>
    <name type="scientific">Mus musculus</name>
    <name type="common">Mouse</name>
    <dbReference type="NCBI Taxonomy" id="10090"/>
</organismHost>
<feature type="chain" id="PRO_0000446099" description="Genome polyprotein">
    <location>
        <begin position="1"/>
        <end position="2303"/>
    </location>
</feature>
<feature type="chain" id="PRO_0000040192" description="Leader protein">
    <location>
        <begin position="1"/>
        <end position="76"/>
    </location>
</feature>
<feature type="chain" id="PRO_0000310972" description="Capsid protein VP0">
    <location>
        <begin position="77"/>
        <end position="414"/>
    </location>
</feature>
<feature type="chain" id="PRO_0000040193" description="Capsid protein VP4">
    <location>
        <begin position="77"/>
        <end position="147"/>
    </location>
</feature>
<feature type="chain" id="PRO_0000040194" description="Capsid protein VP2">
    <location>
        <begin position="148"/>
        <end position="414"/>
    </location>
</feature>
<feature type="chain" id="PRO_0000040195" description="Capsid protein VP3">
    <location>
        <begin position="415"/>
        <end position="646"/>
    </location>
</feature>
<feature type="chain" id="PRO_0000040196" description="Capsid protein VP1">
    <location>
        <begin position="647"/>
        <end position="922"/>
    </location>
</feature>
<feature type="chain" id="PRO_0000040197" description="Protein 2A">
    <location>
        <begin position="923"/>
        <end position="1055"/>
    </location>
</feature>
<feature type="chain" id="PRO_0000040198" description="Protein 2B">
    <location>
        <begin position="1056"/>
        <end position="1191"/>
    </location>
</feature>
<feature type="chain" id="PRO_0000040199" description="Protein 2C">
    <location>
        <begin position="1192"/>
        <end position="1517"/>
    </location>
</feature>
<feature type="chain" id="PRO_0000040200" description="Protein 3A">
    <location>
        <begin position="1518"/>
        <end position="1605"/>
    </location>
</feature>
<feature type="chain" id="PRO_0000040201" description="VPg">
    <location>
        <begin position="1606"/>
        <end position="1625"/>
    </location>
</feature>
<feature type="chain" id="PRO_0000040202" description="Protease 3C">
    <location>
        <begin position="1626"/>
        <end position="1842"/>
    </location>
</feature>
<feature type="chain" id="PRO_0000040203" description="RNA-directed RNA polymerase">
    <location>
        <begin position="1843"/>
        <end position="2303"/>
    </location>
</feature>
<feature type="domain" description="SF3 helicase" evidence="14">
    <location>
        <begin position="1283"/>
        <end position="1448"/>
    </location>
</feature>
<feature type="domain" description="Peptidase C3" evidence="15">
    <location>
        <begin position="1636"/>
        <end position="1829"/>
    </location>
</feature>
<feature type="domain" description="RdRp catalytic" evidence="13">
    <location>
        <begin position="2071"/>
        <end position="2189"/>
    </location>
</feature>
<feature type="zinc finger region" evidence="8">
    <location>
        <begin position="3"/>
        <end position="14"/>
    </location>
</feature>
<feature type="region of interest" description="Acidic" evidence="19">
    <location>
        <begin position="30"/>
        <end position="46"/>
    </location>
</feature>
<feature type="region of interest" description="Theilo" evidence="9">
    <location>
        <begin position="60"/>
        <end position="73"/>
    </location>
</feature>
<feature type="region of interest" description="Disordered" evidence="16">
    <location>
        <begin position="73"/>
        <end position="93"/>
    </location>
</feature>
<feature type="region of interest" description="Host EIF4E binding" evidence="11">
    <location>
        <begin position="1041"/>
        <end position="1047"/>
    </location>
</feature>
<feature type="compositionally biased region" description="Low complexity" evidence="16">
    <location>
        <begin position="80"/>
        <end position="90"/>
    </location>
</feature>
<feature type="active site" description="For protease 3C activity" evidence="15">
    <location>
        <position position="1680"/>
    </location>
</feature>
<feature type="active site" description="For protease 3C activity" evidence="15">
    <location>
        <position position="1714"/>
    </location>
</feature>
<feature type="active site" description="For protease 3C activity" evidence="15">
    <location>
        <position position="1793"/>
    </location>
</feature>
<feature type="active site" description="For RdRp activity" evidence="8">
    <location>
        <position position="2077"/>
    </location>
</feature>
<feature type="active site" description="For RdRp activity" evidence="8">
    <location>
        <position position="2175"/>
    </location>
</feature>
<feature type="binding site" evidence="14">
    <location>
        <begin position="1312"/>
        <end position="1319"/>
    </location>
    <ligand>
        <name>ATP</name>
        <dbReference type="ChEBI" id="CHEBI:30616"/>
    </ligand>
</feature>
<feature type="site" description="Cleavage" evidence="12">
    <location>
        <begin position="147"/>
        <end position="148"/>
    </location>
</feature>
<feature type="site" description="Cleavage; by protease 3C" evidence="4">
    <location>
        <begin position="414"/>
        <end position="415"/>
    </location>
</feature>
<feature type="site" description="Cleavage; by protease 3C" evidence="4">
    <location>
        <begin position="646"/>
        <end position="647"/>
    </location>
</feature>
<feature type="site" description="Cleavage; by protease 3C" evidence="4">
    <location>
        <begin position="922"/>
        <end position="923"/>
    </location>
</feature>
<feature type="site" description="Cleavage; by ribosomal skip" evidence="4">
    <location>
        <begin position="1055"/>
        <end position="1056"/>
    </location>
</feature>
<feature type="site" description="Cleavage; by protease 3C" evidence="4">
    <location>
        <begin position="1191"/>
        <end position="1192"/>
    </location>
</feature>
<feature type="site" description="Cleavage; by protease 3C" evidence="4">
    <location>
        <begin position="1517"/>
        <end position="1518"/>
    </location>
</feature>
<feature type="site" description="Cleavage; by protease 3C" evidence="4">
    <location>
        <begin position="1605"/>
        <end position="1606"/>
    </location>
</feature>
<feature type="site" description="Cleavage; by protease 3C" evidence="4">
    <location>
        <begin position="1625"/>
        <end position="1626"/>
    </location>
</feature>
<feature type="site" description="Cleavage; by protease 3C" evidence="4">
    <location>
        <begin position="1842"/>
        <end position="1843"/>
    </location>
</feature>
<feature type="modified residue" description="O-(5'-phospho-RNA)-tyrosine" evidence="3">
    <location>
        <position position="1608"/>
    </location>
</feature>
<feature type="lipid moiety-binding region" description="N-myristoyl glycine; by host" evidence="10">
    <location>
        <position position="77"/>
    </location>
</feature>
<feature type="disulfide bond" evidence="2">
    <location>
        <begin position="501"/>
        <end position="503"/>
    </location>
</feature>
<feature type="sequence conflict" description="In Ref. 2; AAA47933." evidence="19" ref="2">
    <original>VTGI</original>
    <variation>CYRD</variation>
    <location>
        <begin position="1747"/>
        <end position="1750"/>
    </location>
</feature>
<feature type="sequence conflict" description="In Ref. 2; AAA47933." evidence="19" ref="2">
    <original>DDVVYQSFL</original>
    <variation>GRRCLPIIF</variation>
    <location>
        <begin position="1992"/>
        <end position="2000"/>
    </location>
</feature>
<feature type="sequence conflict" description="In Ref. 2." evidence="19" ref="2">
    <original>E</original>
    <variation>Q</variation>
    <location>
        <position position="2003"/>
    </location>
</feature>
<feature type="sequence conflict" description="In Ref. 2; AAA47933." evidence="19" ref="2">
    <original>E</original>
    <variation>H</variation>
    <location>
        <position position="2008"/>
    </location>
</feature>
<feature type="sequence conflict" description="In Ref. 2; AAA47933." evidence="19" ref="2">
    <original>F</original>
    <variation>L</variation>
    <location>
        <position position="2046"/>
    </location>
</feature>
<feature type="sequence conflict" description="In Ref. 2; AAA47933." evidence="19" ref="2">
    <original>LIRGGLP</original>
    <variation>YSWGPA</variation>
    <location>
        <begin position="2128"/>
        <end position="2134"/>
    </location>
</feature>
<feature type="strand" evidence="21">
    <location>
        <begin position="928"/>
        <end position="936"/>
    </location>
</feature>
<feature type="strand" evidence="21">
    <location>
        <begin position="938"/>
        <end position="947"/>
    </location>
</feature>
<feature type="strand" evidence="21">
    <location>
        <begin position="950"/>
        <end position="958"/>
    </location>
</feature>
<feature type="helix" evidence="21">
    <location>
        <begin position="964"/>
        <end position="972"/>
    </location>
</feature>
<feature type="strand" evidence="21">
    <location>
        <begin position="986"/>
        <end position="994"/>
    </location>
</feature>
<feature type="strand" evidence="21">
    <location>
        <begin position="999"/>
        <end position="1007"/>
    </location>
</feature>
<feature type="strand" evidence="21">
    <location>
        <begin position="1015"/>
        <end position="1021"/>
    </location>
</feature>
<feature type="helix" evidence="21">
    <location>
        <begin position="1027"/>
        <end position="1036"/>
    </location>
</feature>
<feature type="helix" evidence="21">
    <location>
        <begin position="1039"/>
        <end position="1042"/>
    </location>
</feature>
<protein>
    <recommendedName>
        <fullName>Genome polyprotein</fullName>
    </recommendedName>
    <component>
        <recommendedName>
            <fullName>Leader protein</fullName>
            <shortName>L</shortName>
        </recommendedName>
    </component>
    <component>
        <recommendedName>
            <fullName>Capsid protein VP0</fullName>
        </recommendedName>
        <alternativeName>
            <fullName>VP4-VP2</fullName>
        </alternativeName>
    </component>
    <component>
        <recommendedName>
            <fullName>Capsid protein VP4</fullName>
        </recommendedName>
        <alternativeName>
            <fullName>P1A</fullName>
        </alternativeName>
        <alternativeName>
            <fullName>Virion protein 4</fullName>
        </alternativeName>
    </component>
    <component>
        <recommendedName>
            <fullName>Capsid protein VP2</fullName>
        </recommendedName>
        <alternativeName>
            <fullName>P1B</fullName>
        </alternativeName>
        <alternativeName>
            <fullName>Virion protein 2</fullName>
        </alternativeName>
    </component>
    <component>
        <recommendedName>
            <fullName>Capsid protein VP3</fullName>
        </recommendedName>
        <alternativeName>
            <fullName>P1C</fullName>
        </alternativeName>
        <alternativeName>
            <fullName>Virion protein 3</fullName>
        </alternativeName>
    </component>
    <component>
        <recommendedName>
            <fullName>Capsid protein VP1</fullName>
        </recommendedName>
        <alternativeName>
            <fullName>P1D</fullName>
        </alternativeName>
        <alternativeName>
            <fullName>Virion protein 1</fullName>
        </alternativeName>
    </component>
    <component>
        <recommendedName>
            <fullName>Protein 2A</fullName>
            <shortName>P2A</shortName>
        </recommendedName>
    </component>
    <component>
        <recommendedName>
            <fullName>Protein 2B</fullName>
            <shortName>P2B</shortName>
        </recommendedName>
    </component>
    <component>
        <recommendedName>
            <fullName>Protein 2C</fullName>
            <shortName>P2C</shortName>
            <ecNumber>3.6.4.13</ecNumber>
        </recommendedName>
    </component>
    <component>
        <recommendedName>
            <fullName>Protein 3A</fullName>
            <shortName>P3A</shortName>
        </recommendedName>
    </component>
    <component>
        <recommendedName>
            <fullName>VPg</fullName>
            <shortName>P3B</shortName>
        </recommendedName>
        <alternativeName>
            <fullName>Protein 3B</fullName>
        </alternativeName>
    </component>
    <component>
        <recommendedName>
            <fullName>Protease 3C</fullName>
            <shortName>P3C</shortName>
            <ecNumber evidence="8">3.4.22.28</ecNumber>
        </recommendedName>
        <alternativeName>
            <fullName>Picornain 3C</fullName>
        </alternativeName>
    </component>
    <component>
        <recommendedName>
            <fullName>RNA-directed RNA polymerase</fullName>
            <shortName>RdRp</shortName>
            <ecNumber evidence="13">2.7.7.48</ecNumber>
        </recommendedName>
        <alternativeName>
            <fullName>3D polymerase</fullName>
            <shortName>3Dpol</shortName>
        </alternativeName>
        <alternativeName>
            <fullName>Protein 3D</fullName>
            <shortName>3D</shortName>
        </alternativeName>
    </component>
</protein>
<reference key="1">
    <citation type="journal article" date="1988" name="Virology">
        <title>Insights into Theiler's virus neurovirulence based on a genomic comparison of the neurovirulent GDVII and less virulent BeAn strains.</title>
        <authorList>
            <person name="Pevear D.C."/>
            <person name="Borkowski J."/>
            <person name="Calenoff M."/>
            <person name="Oh C.K."/>
            <person name="Ostrawski B."/>
            <person name="Lipton H.L."/>
        </authorList>
    </citation>
    <scope>NUCLEOTIDE SEQUENCE [GENOMIC RNA]</scope>
</reference>
<reference key="2">
    <citation type="journal article" date="1986" name="J. Virol.">
        <title>Theiler's virus genome is closely related to that of encephalomyocarditis virus, the prototype cardiovirus.</title>
        <authorList>
            <person name="Ozden S."/>
            <person name="Tangy F."/>
            <person name="Chamorro M."/>
            <person name="Brahic M."/>
        </authorList>
    </citation>
    <scope>NUCLEOTIDE SEQUENCE [GENOMIC RNA] OF 1704-2303</scope>
</reference>
<reference key="3">
    <citation type="journal article" date="2010" name="J. Virol. Methods">
        <title>Localisation of Theiler's murine encephalomyelitis virus protein 2C to the Golgi apparatus using antibodies generated against a peptide region.</title>
        <authorList>
            <person name="Jauka T."/>
            <person name="Mutsvunguma L."/>
            <person name="Boshoff A."/>
            <person name="Edkins A.L."/>
            <person name="Knox C."/>
        </authorList>
    </citation>
    <scope>SUBCELLULAR LOCATION (PROTEIN 2C)</scope>
</reference>
<reference key="4">
    <citation type="journal article" date="2015" name="J. Virol.">
        <title>Characterization of Ribosomal Frameshifting in Theiler's Murine Encephalomyelitis Virus.</title>
        <authorList>
            <person name="Finch L.K."/>
            <person name="Ling R."/>
            <person name="Napthine S."/>
            <person name="Olspert A."/>
            <person name="Michiels T."/>
            <person name="Lardinois C."/>
            <person name="Bell S."/>
            <person name="Loughran G."/>
            <person name="Brierley I."/>
            <person name="Firth A.E."/>
        </authorList>
    </citation>
    <scope>RIBOSOMAL FRAMESHIFT</scope>
</reference>
<accession>P08545</accession>
<accession>Q88593</accession>
<accession>Q88594</accession>
<organism>
    <name type="scientific">Theiler's murine encephalomyelitis virus (strain GDVII)</name>
    <name type="common">TMEV</name>
    <dbReference type="NCBI Taxonomy" id="12127"/>
    <lineage>
        <taxon>Viruses</taxon>
        <taxon>Riboviria</taxon>
        <taxon>Orthornavirae</taxon>
        <taxon>Pisuviricota</taxon>
        <taxon>Pisoniviricetes</taxon>
        <taxon>Picornavirales</taxon>
        <taxon>Picornaviridae</taxon>
        <taxon>Caphthovirinae</taxon>
        <taxon>Cardiovirus</taxon>
        <taxon>Cardiovirus B</taxon>
    </lineage>
</organism>
<dbReference type="EC" id="3.6.4.13"/>
<dbReference type="EC" id="3.4.22.28" evidence="8"/>
<dbReference type="EC" id="2.7.7.48" evidence="13"/>
<dbReference type="EMBL" id="M20562">
    <property type="protein sequence ID" value="AAA47929.1"/>
    <property type="molecule type" value="Genomic_RNA"/>
</dbReference>
<dbReference type="EMBL" id="M14703">
    <property type="protein sequence ID" value="AAA47933.1"/>
    <property type="molecule type" value="Genomic_RNA"/>
</dbReference>
<dbReference type="PIR" id="A26100">
    <property type="entry name" value="A26100"/>
</dbReference>
<dbReference type="PIR" id="A29193">
    <property type="entry name" value="GNNYTP"/>
</dbReference>
<dbReference type="PDB" id="7NBV">
    <property type="method" value="X-ray"/>
    <property type="resolution" value="1.87 A"/>
    <property type="chains" value="A=923-1055"/>
</dbReference>
<dbReference type="PDBsum" id="7NBV"/>
<dbReference type="SMR" id="P08545"/>
<dbReference type="MEROPS" id="C03.010"/>
<dbReference type="Proteomes" id="UP000008247">
    <property type="component" value="Genome"/>
</dbReference>
<dbReference type="GO" id="GO:0044162">
    <property type="term" value="C:host cell cytoplasmic vesicle membrane"/>
    <property type="evidence" value="ECO:0007669"/>
    <property type="project" value="UniProtKB-SubCell"/>
</dbReference>
<dbReference type="GO" id="GO:0044196">
    <property type="term" value="C:host cell nucleolus"/>
    <property type="evidence" value="ECO:0007669"/>
    <property type="project" value="UniProtKB-SubCell"/>
</dbReference>
<dbReference type="GO" id="GO:0016020">
    <property type="term" value="C:membrane"/>
    <property type="evidence" value="ECO:0007669"/>
    <property type="project" value="UniProtKB-KW"/>
</dbReference>
<dbReference type="GO" id="GO:0039618">
    <property type="term" value="C:T=pseudo3 icosahedral viral capsid"/>
    <property type="evidence" value="ECO:0007669"/>
    <property type="project" value="UniProtKB-KW"/>
</dbReference>
<dbReference type="GO" id="GO:0005524">
    <property type="term" value="F:ATP binding"/>
    <property type="evidence" value="ECO:0007669"/>
    <property type="project" value="UniProtKB-KW"/>
</dbReference>
<dbReference type="GO" id="GO:0016887">
    <property type="term" value="F:ATP hydrolysis activity"/>
    <property type="evidence" value="ECO:0007669"/>
    <property type="project" value="RHEA"/>
</dbReference>
<dbReference type="GO" id="GO:0015267">
    <property type="term" value="F:channel activity"/>
    <property type="evidence" value="ECO:0007669"/>
    <property type="project" value="UniProtKB-KW"/>
</dbReference>
<dbReference type="GO" id="GO:0004197">
    <property type="term" value="F:cysteine-type endopeptidase activity"/>
    <property type="evidence" value="ECO:0007669"/>
    <property type="project" value="UniProtKB-EC"/>
</dbReference>
<dbReference type="GO" id="GO:0030291">
    <property type="term" value="F:protein serine/threonine kinase inhibitor activity"/>
    <property type="evidence" value="ECO:0007669"/>
    <property type="project" value="UniProtKB-KW"/>
</dbReference>
<dbReference type="GO" id="GO:0003723">
    <property type="term" value="F:RNA binding"/>
    <property type="evidence" value="ECO:0007669"/>
    <property type="project" value="UniProtKB-KW"/>
</dbReference>
<dbReference type="GO" id="GO:0003724">
    <property type="term" value="F:RNA helicase activity"/>
    <property type="evidence" value="ECO:0007669"/>
    <property type="project" value="UniProtKB-EC"/>
</dbReference>
<dbReference type="GO" id="GO:0003968">
    <property type="term" value="F:RNA-directed RNA polymerase activity"/>
    <property type="evidence" value="ECO:0007669"/>
    <property type="project" value="UniProtKB-KW"/>
</dbReference>
<dbReference type="GO" id="GO:0005198">
    <property type="term" value="F:structural molecule activity"/>
    <property type="evidence" value="ECO:0007669"/>
    <property type="project" value="InterPro"/>
</dbReference>
<dbReference type="GO" id="GO:0008270">
    <property type="term" value="F:zinc ion binding"/>
    <property type="evidence" value="ECO:0007669"/>
    <property type="project" value="UniProtKB-KW"/>
</dbReference>
<dbReference type="GO" id="GO:0006351">
    <property type="term" value="P:DNA-templated transcription"/>
    <property type="evidence" value="ECO:0007669"/>
    <property type="project" value="InterPro"/>
</dbReference>
<dbReference type="GO" id="GO:0034220">
    <property type="term" value="P:monoatomic ion transmembrane transport"/>
    <property type="evidence" value="ECO:0007669"/>
    <property type="project" value="UniProtKB-KW"/>
</dbReference>
<dbReference type="GO" id="GO:0006508">
    <property type="term" value="P:proteolysis"/>
    <property type="evidence" value="ECO:0007669"/>
    <property type="project" value="UniProtKB-KW"/>
</dbReference>
<dbReference type="GO" id="GO:0046718">
    <property type="term" value="P:symbiont entry into host cell"/>
    <property type="evidence" value="ECO:0007669"/>
    <property type="project" value="UniProtKB-KW"/>
</dbReference>
<dbReference type="GO" id="GO:0039520">
    <property type="term" value="P:symbiont-mediated activation of host autophagy"/>
    <property type="evidence" value="ECO:0000250"/>
    <property type="project" value="UniProtKB"/>
</dbReference>
<dbReference type="GO" id="GO:0039540">
    <property type="term" value="P:symbiont-mediated suppression of host cytoplasmic pattern recognition receptor signaling pathway via inhibition of RIG-I activity"/>
    <property type="evidence" value="ECO:0007669"/>
    <property type="project" value="UniProtKB-KW"/>
</dbReference>
<dbReference type="GO" id="GO:0039522">
    <property type="term" value="P:symbiont-mediated suppression of host mRNA export from nucleus"/>
    <property type="evidence" value="ECO:0007669"/>
    <property type="project" value="UniProtKB-KW"/>
</dbReference>
<dbReference type="GO" id="GO:0039580">
    <property type="term" value="P:symbiont-mediated suppression of host PKR/eIFalpha signaling"/>
    <property type="evidence" value="ECO:0007669"/>
    <property type="project" value="UniProtKB-KW"/>
</dbReference>
<dbReference type="GO" id="GO:0039502">
    <property type="term" value="P:symbiont-mediated suppression of host type I interferon-mediated signaling pathway"/>
    <property type="evidence" value="ECO:0007669"/>
    <property type="project" value="UniProtKB-KW"/>
</dbReference>
<dbReference type="GO" id="GO:0039694">
    <property type="term" value="P:viral RNA genome replication"/>
    <property type="evidence" value="ECO:0007669"/>
    <property type="project" value="InterPro"/>
</dbReference>
<dbReference type="GO" id="GO:0075523">
    <property type="term" value="P:viral translational frameshifting"/>
    <property type="evidence" value="ECO:0007669"/>
    <property type="project" value="UniProtKB-KW"/>
</dbReference>
<dbReference type="GO" id="GO:0019062">
    <property type="term" value="P:virion attachment to host cell"/>
    <property type="evidence" value="ECO:0007669"/>
    <property type="project" value="UniProtKB-KW"/>
</dbReference>
<dbReference type="CDD" id="cd23211">
    <property type="entry name" value="Cardiovirus_RdRp"/>
    <property type="match status" value="1"/>
</dbReference>
<dbReference type="CDD" id="cd00205">
    <property type="entry name" value="rhv_like"/>
    <property type="match status" value="3"/>
</dbReference>
<dbReference type="FunFam" id="2.40.10.10:FF:000145">
    <property type="entry name" value="Genome polyprotein"/>
    <property type="match status" value="1"/>
</dbReference>
<dbReference type="FunFam" id="2.60.120.20:FF:000009">
    <property type="entry name" value="Genome polyprotein"/>
    <property type="match status" value="1"/>
</dbReference>
<dbReference type="FunFam" id="2.60.120.20:FF:000011">
    <property type="entry name" value="Genome polyprotein"/>
    <property type="match status" value="1"/>
</dbReference>
<dbReference type="FunFam" id="2.60.120.20:FF:000013">
    <property type="entry name" value="Genome polyprotein"/>
    <property type="match status" value="1"/>
</dbReference>
<dbReference type="FunFam" id="3.30.70.270:FF:000046">
    <property type="entry name" value="Genome polyprotein"/>
    <property type="match status" value="1"/>
</dbReference>
<dbReference type="FunFam" id="3.30.70.270:FF:000065">
    <property type="entry name" value="Genome polyprotein"/>
    <property type="match status" value="1"/>
</dbReference>
<dbReference type="FunFam" id="4.10.90.10:FF:000002">
    <property type="entry name" value="Genome polyprotein"/>
    <property type="match status" value="1"/>
</dbReference>
<dbReference type="Gene3D" id="1.20.960.20">
    <property type="match status" value="1"/>
</dbReference>
<dbReference type="Gene3D" id="2.60.120.20">
    <property type="match status" value="3"/>
</dbReference>
<dbReference type="Gene3D" id="3.30.70.270">
    <property type="match status" value="2"/>
</dbReference>
<dbReference type="Gene3D" id="4.10.90.10">
    <property type="entry name" value="Capsid protein VP4 superfamily, Picornavirus"/>
    <property type="match status" value="1"/>
</dbReference>
<dbReference type="Gene3D" id="2.40.10.10">
    <property type="entry name" value="Trypsin-like serine proteases"/>
    <property type="match status" value="1"/>
</dbReference>
<dbReference type="InterPro" id="IPR015031">
    <property type="entry name" value="Capsid_VP4_Picornavir"/>
</dbReference>
<dbReference type="InterPro" id="IPR037080">
    <property type="entry name" value="Capsid_VP4_sf_Picornavirus"/>
</dbReference>
<dbReference type="InterPro" id="IPR043502">
    <property type="entry name" value="DNA/RNA_pol_sf"/>
</dbReference>
<dbReference type="InterPro" id="IPR004004">
    <property type="entry name" value="Helic/Pol/Pept_Calicivir-typ"/>
</dbReference>
<dbReference type="InterPro" id="IPR000605">
    <property type="entry name" value="Helicase_SF3_ssDNA/RNA_vir"/>
</dbReference>
<dbReference type="InterPro" id="IPR014759">
    <property type="entry name" value="Helicase_SF3_ssRNA_vir"/>
</dbReference>
<dbReference type="InterPro" id="IPR044067">
    <property type="entry name" value="PCV_3C_PRO"/>
</dbReference>
<dbReference type="InterPro" id="IPR000199">
    <property type="entry name" value="Peptidase_C3A/C3B_picornavir"/>
</dbReference>
<dbReference type="InterPro" id="IPR009003">
    <property type="entry name" value="Peptidase_S1_PA"/>
</dbReference>
<dbReference type="InterPro" id="IPR043504">
    <property type="entry name" value="Peptidase_S1_PA_chymotrypsin"/>
</dbReference>
<dbReference type="InterPro" id="IPR001676">
    <property type="entry name" value="Picornavirus_capsid"/>
</dbReference>
<dbReference type="InterPro" id="IPR043128">
    <property type="entry name" value="Rev_trsase/Diguanyl_cyclase"/>
</dbReference>
<dbReference type="InterPro" id="IPR033703">
    <property type="entry name" value="Rhv-like"/>
</dbReference>
<dbReference type="InterPro" id="IPR001205">
    <property type="entry name" value="RNA-dir_pol_C"/>
</dbReference>
<dbReference type="InterPro" id="IPR007094">
    <property type="entry name" value="RNA-dir_pol_PSvirus"/>
</dbReference>
<dbReference type="InterPro" id="IPR029053">
    <property type="entry name" value="Viral_coat"/>
</dbReference>
<dbReference type="Pfam" id="PF00548">
    <property type="entry name" value="Peptidase_C3"/>
    <property type="match status" value="1"/>
</dbReference>
<dbReference type="Pfam" id="PF00680">
    <property type="entry name" value="RdRP_1"/>
    <property type="match status" value="1"/>
</dbReference>
<dbReference type="Pfam" id="PF00073">
    <property type="entry name" value="Rhv"/>
    <property type="match status" value="2"/>
</dbReference>
<dbReference type="Pfam" id="PF22663">
    <property type="entry name" value="Rhv_5"/>
    <property type="match status" value="1"/>
</dbReference>
<dbReference type="Pfam" id="PF00910">
    <property type="entry name" value="RNA_helicase"/>
    <property type="match status" value="1"/>
</dbReference>
<dbReference type="Pfam" id="PF08935">
    <property type="entry name" value="VP4_2"/>
    <property type="match status" value="1"/>
</dbReference>
<dbReference type="PRINTS" id="PR00918">
    <property type="entry name" value="CALICVIRUSNS"/>
</dbReference>
<dbReference type="SUPFAM" id="SSF56672">
    <property type="entry name" value="DNA/RNA polymerases"/>
    <property type="match status" value="1"/>
</dbReference>
<dbReference type="SUPFAM" id="SSF88633">
    <property type="entry name" value="Positive stranded ssRNA viruses"/>
    <property type="match status" value="2"/>
</dbReference>
<dbReference type="SUPFAM" id="SSF50494">
    <property type="entry name" value="Trypsin-like serine proteases"/>
    <property type="match status" value="1"/>
</dbReference>
<dbReference type="PROSITE" id="PS51874">
    <property type="entry name" value="PCV_3C_PRO"/>
    <property type="match status" value="1"/>
</dbReference>
<dbReference type="PROSITE" id="PS50507">
    <property type="entry name" value="RDRP_SSRNA_POS"/>
    <property type="match status" value="1"/>
</dbReference>
<dbReference type="PROSITE" id="PS51218">
    <property type="entry name" value="SF3_HELICASE_2"/>
    <property type="match status" value="1"/>
</dbReference>
<proteinExistence type="evidence at protein level"/>